<gene>
    <name evidence="5" type="primary">TPS-(+)Apin1</name>
</gene>
<comment type="function">
    <text evidence="4">Monoterpene synthase (TPS) involved in the biosynthesis of monoterpene natural products included in conifer oleoresin secretions and volatile emissions; these compounds contribute to biotic and abiotic stress defense against herbivores and pathogens (PubMed:23679205). Catalyzes the conversion of (2E)-geranyl diphosphate (GPP) to (+)-alpha-pinene (PubMed:23679205).</text>
</comment>
<comment type="catalytic activity">
    <reaction evidence="4">
        <text>(2E)-geranyl diphosphate = (1R,5R)-alpha-pinene + diphosphate</text>
        <dbReference type="Rhea" id="RHEA:32575"/>
        <dbReference type="ChEBI" id="CHEBI:28261"/>
        <dbReference type="ChEBI" id="CHEBI:33019"/>
        <dbReference type="ChEBI" id="CHEBI:58057"/>
        <dbReference type="EC" id="4.2.3.121"/>
    </reaction>
    <physiologicalReaction direction="left-to-right" evidence="4">
        <dbReference type="Rhea" id="RHEA:32576"/>
    </physiologicalReaction>
</comment>
<comment type="cofactor">
    <cofactor evidence="1">
        <name>Mg(2+)</name>
        <dbReference type="ChEBI" id="CHEBI:18420"/>
    </cofactor>
    <cofactor evidence="1">
        <name>Mn(2+)</name>
        <dbReference type="ChEBI" id="CHEBI:29035"/>
    </cofactor>
    <text evidence="1">Binds 3 Mg(2+) or Mn(2+) ions per subunit.</text>
</comment>
<comment type="pathway">
    <text evidence="4">Terpene metabolism; oleoresin biosynthesis.</text>
</comment>
<comment type="pathway">
    <text evidence="4">Secondary metabolite biosynthesis; terpenoid biosynthesis.</text>
</comment>
<comment type="subcellular location">
    <subcellularLocation>
        <location evidence="3">Plastid</location>
        <location evidence="3">Chloroplast</location>
    </subcellularLocation>
</comment>
<comment type="domain">
    <text evidence="6">The Asp-Asp-Xaa-Xaa-Asp/Glu (DDXXD/E) motif is important for the catalytic activity, presumably through binding to Mg(2+).</text>
</comment>
<comment type="similarity">
    <text evidence="6">Belongs to the terpene synthase family. Tpsd subfamily.</text>
</comment>
<organism>
    <name type="scientific">Pinus banksiana</name>
    <name type="common">Jack pine</name>
    <name type="synonym">Pinus divaricata</name>
    <dbReference type="NCBI Taxonomy" id="3353"/>
    <lineage>
        <taxon>Eukaryota</taxon>
        <taxon>Viridiplantae</taxon>
        <taxon>Streptophyta</taxon>
        <taxon>Embryophyta</taxon>
        <taxon>Tracheophyta</taxon>
        <taxon>Spermatophyta</taxon>
        <taxon>Pinopsida</taxon>
        <taxon>Pinidae</taxon>
        <taxon>Conifers I</taxon>
        <taxon>Pinales</taxon>
        <taxon>Pinaceae</taxon>
        <taxon>Pinus</taxon>
        <taxon>Pinus subgen. Pinus</taxon>
    </lineage>
</organism>
<keyword id="KW-0150">Chloroplast</keyword>
<keyword id="KW-0456">Lyase</keyword>
<keyword id="KW-0460">Magnesium</keyword>
<keyword id="KW-0479">Metal-binding</keyword>
<keyword id="KW-0934">Plastid</keyword>
<keyword id="KW-0809">Transit peptide</keyword>
<evidence type="ECO:0000250" key="1">
    <source>
        <dbReference type="UniProtKB" id="A0A1C9J6A7"/>
    </source>
</evidence>
<evidence type="ECO:0000250" key="2">
    <source>
        <dbReference type="UniProtKB" id="Q40577"/>
    </source>
</evidence>
<evidence type="ECO:0000255" key="3"/>
<evidence type="ECO:0000269" key="4">
    <source>
    </source>
</evidence>
<evidence type="ECO:0000303" key="5">
    <source>
    </source>
</evidence>
<evidence type="ECO:0000305" key="6"/>
<sequence length="628" mass="71327">MALVSAVPLNSKLCLCRTLFGFSHELKAIHSTVPNLGMCRGGKSIAPSMSMSSTTSVSNEDEAPRRIAGHHSNLWDDDSIASLSTSYEAPSYREGADRLIGEVKNIFDLMSVEDGVFTSPLSDLHHRLWMVDSVERLGIDRHFKDEINSALDHVYSYWTEKGIGRGREGGVTDLNSTALGLRTLRLHGYTVSSHVLDHLKNEKGQFTCSAIQTEGEIRDVLNLFRASLIAFPGEKIMEAAEIFSTMYLKDALQKIPPSGLSQEIEYLLEFGWHTNLPRMETRMYIDVFGEDTTFETPYLIREKLLELAKLEFNIFHSLVKRELQSLSRWWKDYGFPEITFSRHRHVEYYTLAACIANDPKHSAFRLGFGKISHMITILDDIYDTFGTMEELELLTAAFKRWDPSSIECLPDYMKGVYMAVYDNINEMAREAQKIQGWDTVSYARKSWEAFIGAYIQEAKWISSGYLPTFDEYLENGKVSFGSRITTLEPMLTLGFPLPPRILQEIDFPSKFNDLTCAILRLKGDTQCYKADRARGEEASAVSCYMKDHPGITEEDAVNQVNAMVDNLTKELNWELLRPDSGVPISYKKVAFDICRVFHYGYKYRDGFSVASVEIKNLVTRTVVETVPL</sequence>
<feature type="transit peptide" description="Chloroplast" evidence="3">
    <location>
        <begin position="1"/>
        <end position="18"/>
    </location>
</feature>
<feature type="chain" id="PRO_0000455025" description="(+)-alpha pinene synthase 1, chloroplastic">
    <location>
        <begin position="19"/>
        <end position="628"/>
    </location>
</feature>
<feature type="short sequence motif" description="DDXXD motif" evidence="6">
    <location>
        <begin position="379"/>
        <end position="383"/>
    </location>
</feature>
<feature type="binding site" evidence="2">
    <location>
        <position position="379"/>
    </location>
    <ligand>
        <name>Mg(2+)</name>
        <dbReference type="ChEBI" id="CHEBI:18420"/>
        <label>1</label>
    </ligand>
</feature>
<feature type="binding site" evidence="2">
    <location>
        <position position="379"/>
    </location>
    <ligand>
        <name>Mg(2+)</name>
        <dbReference type="ChEBI" id="CHEBI:18420"/>
        <label>2</label>
    </ligand>
</feature>
<feature type="binding site" evidence="2">
    <location>
        <position position="383"/>
    </location>
    <ligand>
        <name>Mg(2+)</name>
        <dbReference type="ChEBI" id="CHEBI:18420"/>
        <label>1</label>
    </ligand>
</feature>
<feature type="binding site" evidence="2">
    <location>
        <position position="383"/>
    </location>
    <ligand>
        <name>Mg(2+)</name>
        <dbReference type="ChEBI" id="CHEBI:18420"/>
        <label>2</label>
    </ligand>
</feature>
<feature type="binding site" evidence="2">
    <location>
        <position position="531"/>
    </location>
    <ligand>
        <name>Mg(2+)</name>
        <dbReference type="ChEBI" id="CHEBI:18420"/>
        <label>3</label>
    </ligand>
</feature>
<proteinExistence type="evidence at protein level"/>
<reference key="1">
    <citation type="journal article" date="2013" name="BMC Plant Biol.">
        <title>Transcriptome resources and functional characterization of monoterpene synthases for two host species of the mountain pine beetle, lodgepole pine (Pinus contorta) and jack pine (Pinus banksiana).</title>
        <authorList>
            <person name="Hall D.E."/>
            <person name="Yuen M.M.S."/>
            <person name="Jancsik S."/>
            <person name="Quesada A.L."/>
            <person name="Dullat H.K."/>
            <person name="Li M."/>
            <person name="Henderson H."/>
            <person name="Arango-Velez A."/>
            <person name="Liao N.Y."/>
            <person name="Docking R.T."/>
            <person name="Chan S.K."/>
            <person name="Cooke J.E.K."/>
            <person name="Breuil C."/>
            <person name="Jones S.J.M."/>
            <person name="Keeling C.I."/>
            <person name="Bohlmann J."/>
        </authorList>
    </citation>
    <scope>NUCLEOTIDE SEQUENCE [MRNA]</scope>
    <scope>FUNCTION</scope>
    <scope>CATALYTIC ACTIVITY</scope>
    <scope>PATHWAY</scope>
</reference>
<name>RAPN1_PINBN</name>
<dbReference type="EC" id="4.2.3.121" evidence="4"/>
<dbReference type="EMBL" id="JQ240298">
    <property type="protein sequence ID" value="AFU73850.1"/>
    <property type="molecule type" value="mRNA"/>
</dbReference>
<dbReference type="SMR" id="R9QMR1"/>
<dbReference type="BRENDA" id="4.2.3.121">
    <property type="organism ID" value="4842"/>
</dbReference>
<dbReference type="UniPathway" id="UPA00213"/>
<dbReference type="UniPathway" id="UPA00924"/>
<dbReference type="GO" id="GO:0009507">
    <property type="term" value="C:chloroplast"/>
    <property type="evidence" value="ECO:0007669"/>
    <property type="project" value="UniProtKB-SubCell"/>
</dbReference>
<dbReference type="GO" id="GO:0000287">
    <property type="term" value="F:magnesium ion binding"/>
    <property type="evidence" value="ECO:0007669"/>
    <property type="project" value="InterPro"/>
</dbReference>
<dbReference type="GO" id="GO:0050550">
    <property type="term" value="F:pinene synthase activity"/>
    <property type="evidence" value="ECO:0000314"/>
    <property type="project" value="UniProtKB"/>
</dbReference>
<dbReference type="GO" id="GO:0010333">
    <property type="term" value="F:terpene synthase activity"/>
    <property type="evidence" value="ECO:0000314"/>
    <property type="project" value="UniProtKB"/>
</dbReference>
<dbReference type="GO" id="GO:0018867">
    <property type="term" value="P:alpha-pinene metabolic process"/>
    <property type="evidence" value="ECO:0000314"/>
    <property type="project" value="UniProtKB"/>
</dbReference>
<dbReference type="GO" id="GO:0016102">
    <property type="term" value="P:diterpenoid biosynthetic process"/>
    <property type="evidence" value="ECO:0007669"/>
    <property type="project" value="InterPro"/>
</dbReference>
<dbReference type="GO" id="GO:0010597">
    <property type="term" value="P:green leaf volatile biosynthetic process"/>
    <property type="evidence" value="ECO:0000314"/>
    <property type="project" value="UniProtKB"/>
</dbReference>
<dbReference type="GO" id="GO:0016114">
    <property type="term" value="P:terpenoid biosynthetic process"/>
    <property type="evidence" value="ECO:0000314"/>
    <property type="project" value="UniProtKB"/>
</dbReference>
<dbReference type="CDD" id="cd00684">
    <property type="entry name" value="Terpene_cyclase_plant_C1"/>
    <property type="match status" value="1"/>
</dbReference>
<dbReference type="FunFam" id="1.50.10.130:FF:000004">
    <property type="entry name" value="Carene synthase, chloroplastic"/>
    <property type="match status" value="1"/>
</dbReference>
<dbReference type="FunFam" id="1.10.600.10:FF:000005">
    <property type="entry name" value="Ent-kaur-16-ene synthase, chloroplastic"/>
    <property type="match status" value="1"/>
</dbReference>
<dbReference type="Gene3D" id="1.10.600.10">
    <property type="entry name" value="Farnesyl Diphosphate Synthase"/>
    <property type="match status" value="1"/>
</dbReference>
<dbReference type="Gene3D" id="1.50.10.130">
    <property type="entry name" value="Terpene synthase, N-terminal domain"/>
    <property type="match status" value="1"/>
</dbReference>
<dbReference type="InterPro" id="IPR008949">
    <property type="entry name" value="Isoprenoid_synthase_dom_sf"/>
</dbReference>
<dbReference type="InterPro" id="IPR034741">
    <property type="entry name" value="Terpene_cyclase-like_1_C"/>
</dbReference>
<dbReference type="InterPro" id="IPR044814">
    <property type="entry name" value="Terpene_cyclase_plant_C1"/>
</dbReference>
<dbReference type="InterPro" id="IPR001906">
    <property type="entry name" value="Terpene_synth_N"/>
</dbReference>
<dbReference type="InterPro" id="IPR036965">
    <property type="entry name" value="Terpene_synth_N_sf"/>
</dbReference>
<dbReference type="InterPro" id="IPR050148">
    <property type="entry name" value="Terpene_synthase-like"/>
</dbReference>
<dbReference type="InterPro" id="IPR005630">
    <property type="entry name" value="Terpene_synthase_metal-bd"/>
</dbReference>
<dbReference type="InterPro" id="IPR008930">
    <property type="entry name" value="Terpenoid_cyclase/PrenylTrfase"/>
</dbReference>
<dbReference type="PANTHER" id="PTHR31739:SF25">
    <property type="entry name" value="(E,E)-GERANYLLINALOOL SYNTHASE"/>
    <property type="match status" value="1"/>
</dbReference>
<dbReference type="PANTHER" id="PTHR31739">
    <property type="entry name" value="ENT-COPALYL DIPHOSPHATE SYNTHASE, CHLOROPLASTIC"/>
    <property type="match status" value="1"/>
</dbReference>
<dbReference type="Pfam" id="PF01397">
    <property type="entry name" value="Terpene_synth"/>
    <property type="match status" value="1"/>
</dbReference>
<dbReference type="Pfam" id="PF03936">
    <property type="entry name" value="Terpene_synth_C"/>
    <property type="match status" value="1"/>
</dbReference>
<dbReference type="SFLD" id="SFLDS00005">
    <property type="entry name" value="Isoprenoid_Synthase_Type_I"/>
    <property type="match status" value="1"/>
</dbReference>
<dbReference type="SFLD" id="SFLDG01019">
    <property type="entry name" value="Terpene_Cyclase_Like_1_C_Termi"/>
    <property type="match status" value="1"/>
</dbReference>
<dbReference type="SFLD" id="SFLDG01014">
    <property type="entry name" value="Terpene_Cyclase_Like_1_N-term"/>
    <property type="match status" value="1"/>
</dbReference>
<dbReference type="SUPFAM" id="SSF48239">
    <property type="entry name" value="Terpenoid cyclases/Protein prenyltransferases"/>
    <property type="match status" value="1"/>
</dbReference>
<dbReference type="SUPFAM" id="SSF48576">
    <property type="entry name" value="Terpenoid synthases"/>
    <property type="match status" value="1"/>
</dbReference>
<accession>R9QMR1</accession>
<protein>
    <recommendedName>
        <fullName evidence="5">(+)-alpha pinene synthase 1, chloroplastic</fullName>
        <ecNumber evidence="4">4.2.3.121</ecNumber>
    </recommendedName>
    <alternativeName>
        <fullName evidence="5">Terpene synthase (+)alphapin1</fullName>
        <shortName evidence="5">PbTPS-(+)alphapin1</shortName>
    </alternativeName>
</protein>